<feature type="chain" id="PRO_0000456029" description="Retron Vc95 putative HNH endonuclease">
    <location>
        <begin position="1"/>
        <end position="205"/>
    </location>
</feature>
<comment type="function">
    <text evidence="1">Putative HNH endonuclease component of antiviral defense system retron Vc95, composed of a non-coding RNA (ncRNA), a reverse transcriptase (RT), a probable ATP-binding protein and this protein. Expression of retron Vc95 confers protection against bacteriophages T2, T4 and T6. At multiplicity of infection (MOI) of 0.02 cultures slow growth when infected with T4 but do not collapse, at MOI 2 cultures enter growth stasis.</text>
</comment>
<evidence type="ECO:0000269" key="1">
    <source>
    </source>
</evidence>
<evidence type="ECO:0000303" key="2">
    <source>
    </source>
</evidence>
<evidence type="ECO:0000303" key="3">
    <source>
    </source>
</evidence>
<evidence type="ECO:0000303" key="4">
    <source ref="1"/>
</evidence>
<evidence type="ECO:0000305" key="5"/>
<evidence type="ECO:0000312" key="6">
    <source>
        <dbReference type="EMBL" id="KFZ34333.1"/>
    </source>
</evidence>
<gene>
    <name type="ORF">Ga0059260_01847</name>
    <name evidence="4" type="ORF">KV36_09040</name>
</gene>
<keyword id="KW-0051">Antiviral defense</keyword>
<keyword id="KW-0255">Endonuclease</keyword>
<keyword id="KW-0378">Hydrolase</keyword>
<keyword id="KW-0540">Nuclease</keyword>
<accession>P0DV99</accession>
<proteinExistence type="evidence at protein level"/>
<dbReference type="EMBL" id="JRBD01000006">
    <property type="protein sequence ID" value="KFZ34333.1"/>
    <property type="molecule type" value="Genomic_DNA"/>
</dbReference>
<dbReference type="RefSeq" id="WP_000612657.1">
    <property type="nucleotide sequence ID" value="NZ_WOFA01000023.1"/>
</dbReference>
<dbReference type="SMR" id="P0DV99"/>
<dbReference type="KEGG" id="vcf:IR04_17020"/>
<dbReference type="GO" id="GO:0004519">
    <property type="term" value="F:endonuclease activity"/>
    <property type="evidence" value="ECO:0007669"/>
    <property type="project" value="UniProtKB-KW"/>
</dbReference>
<dbReference type="GO" id="GO:0051607">
    <property type="term" value="P:defense response to virus"/>
    <property type="evidence" value="ECO:0007669"/>
    <property type="project" value="UniProtKB-KW"/>
</dbReference>
<dbReference type="CDD" id="cd00085">
    <property type="entry name" value="HNHc"/>
    <property type="match status" value="1"/>
</dbReference>
<dbReference type="Gene3D" id="1.10.30.50">
    <property type="match status" value="1"/>
</dbReference>
<dbReference type="InterPro" id="IPR013467">
    <property type="entry name" value="HNH78-like"/>
</dbReference>
<dbReference type="InterPro" id="IPR003615">
    <property type="entry name" value="HNH_nuc"/>
</dbReference>
<dbReference type="NCBIfam" id="TIGR02646">
    <property type="entry name" value="retron system putative HNH endonuclease"/>
    <property type="match status" value="1"/>
</dbReference>
<dbReference type="SMART" id="SM00507">
    <property type="entry name" value="HNHc"/>
    <property type="match status" value="1"/>
</dbReference>
<organism>
    <name type="scientific">Vibrio cholerae serotype O1 biovar El Tor</name>
    <dbReference type="NCBI Taxonomy" id="686"/>
    <lineage>
        <taxon>Bacteria</taxon>
        <taxon>Pseudomonadati</taxon>
        <taxon>Pseudomonadota</taxon>
        <taxon>Gammaproteobacteria</taxon>
        <taxon>Vibrionales</taxon>
        <taxon>Vibrionaceae</taxon>
        <taxon>Vibrio</taxon>
    </lineage>
</organism>
<protein>
    <recommendedName>
        <fullName evidence="3">Retron Vc95 putative HNH endonuclease</fullName>
    </recommendedName>
    <alternativeName>
        <fullName evidence="2">ORF205</fullName>
    </alternativeName>
    <alternativeName>
        <fullName evidence="5">TIGR02646 family protein</fullName>
    </alternativeName>
</protein>
<sequence>MIPLSHNNTPTELENYVKLKGQSLTIQDFSAHDFQGVKKIVRDRLHTLQGELCVYCEKKYSVDEMQVEHIKPKSGRNAQPNLCFTYSNYAVSCIQENRKTQTCGQKKKDNILFIEPTSPSCNSHFSLDTDGFINPRGFKNRKEKHSIQTTIDMLGLNKPHLQLERKKQIERLIYILKATKHNRHELTNKFIKSGNFKYILRELTM</sequence>
<name>HNH95_VIBCE</name>
<reference evidence="6" key="1">
    <citation type="submission" date="2014-09" db="EMBL/GenBank/DDBJ databases">
        <title>Vibrio cholerae O1 biovar El Tor MAK676 whole genome shotgun sequence.</title>
        <authorList>
            <person name="Kritzky A."/>
            <person name="Cheldyshova N.B."/>
            <person name="Kulshan T.A."/>
            <person name="Krasnov Y.M."/>
            <person name="Cherkasov A.V."/>
            <person name="Smirnova N.I."/>
        </authorList>
    </citation>
    <scope>NUCLEOTIDE SEQUENCE [LARGE SCALE GENOMIC DNA]</scope>
    <source>
        <strain>MAK676</strain>
    </source>
</reference>
<reference key="2">
    <citation type="journal article" date="1999" name="Mol. Microbiol.">
        <title>A retroelement in Vibrio cholerae.</title>
        <authorList>
            <person name="Shimamoto T."/>
            <person name="Kobayashi M."/>
            <person name="Tsuchiya T."/>
            <person name="Shinoda S."/>
            <person name="Kawakami H."/>
            <person name="Inouye S."/>
            <person name="Inouye M."/>
        </authorList>
    </citation>
    <scope>IDENTIFICATION</scope>
    <source>
        <strain>O139</strain>
    </source>
</reference>
<reference key="3">
    <citation type="journal article" date="2020" name="Cell">
        <title>Bacterial Retrons Function In Anti-Phage Defense.</title>
        <authorList>
            <person name="Millman A."/>
            <person name="Bernheim A."/>
            <person name="Stokar-Avihail A."/>
            <person name="Fedorenko T."/>
            <person name="Voichek M."/>
            <person name="Leavitt A."/>
            <person name="Oppenheimer-Shaanan Y."/>
            <person name="Sorek R."/>
        </authorList>
    </citation>
    <scope>FUNCTION IN ANTIVIRAL DEFENSE</scope>
    <scope>IDENTIFICATION AS A RETRON</scope>
    <source>
        <strain>MAK676</strain>
    </source>
</reference>